<reference key="1">
    <citation type="submission" date="2005-07" db="EMBL/GenBank/DDBJ databases">
        <title>Complete sequence of Synechococcus sp. CC9605.</title>
        <authorList>
            <consortium name="US DOE Joint Genome Institute"/>
            <person name="Copeland A."/>
            <person name="Lucas S."/>
            <person name="Lapidus A."/>
            <person name="Barry K."/>
            <person name="Detter J.C."/>
            <person name="Glavina T."/>
            <person name="Hammon N."/>
            <person name="Israni S."/>
            <person name="Pitluck S."/>
            <person name="Schmutz J."/>
            <person name="Martinez M."/>
            <person name="Larimer F."/>
            <person name="Land M."/>
            <person name="Kyrpides N."/>
            <person name="Ivanova N."/>
            <person name="Richardson P."/>
        </authorList>
    </citation>
    <scope>NUCLEOTIDE SEQUENCE [LARGE SCALE GENOMIC DNA]</scope>
    <source>
        <strain>CC9605</strain>
    </source>
</reference>
<feature type="chain" id="PRO_1000022412" description="Pyridoxine 5'-phosphate synthase">
    <location>
        <begin position="1"/>
        <end position="249"/>
    </location>
</feature>
<feature type="active site" description="Proton acceptor" evidence="1">
    <location>
        <position position="43"/>
    </location>
</feature>
<feature type="active site" description="Proton acceptor" evidence="1">
    <location>
        <position position="70"/>
    </location>
</feature>
<feature type="active site" description="Proton donor" evidence="1">
    <location>
        <position position="190"/>
    </location>
</feature>
<feature type="binding site" evidence="1">
    <location>
        <position position="7"/>
    </location>
    <ligand>
        <name>3-amino-2-oxopropyl phosphate</name>
        <dbReference type="ChEBI" id="CHEBI:57279"/>
    </ligand>
</feature>
<feature type="binding site" evidence="1">
    <location>
        <begin position="9"/>
        <end position="10"/>
    </location>
    <ligand>
        <name>1-deoxy-D-xylulose 5-phosphate</name>
        <dbReference type="ChEBI" id="CHEBI:57792"/>
    </ligand>
</feature>
<feature type="binding site" evidence="1">
    <location>
        <position position="18"/>
    </location>
    <ligand>
        <name>3-amino-2-oxopropyl phosphate</name>
        <dbReference type="ChEBI" id="CHEBI:57279"/>
    </ligand>
</feature>
<feature type="binding site" evidence="1">
    <location>
        <position position="45"/>
    </location>
    <ligand>
        <name>1-deoxy-D-xylulose 5-phosphate</name>
        <dbReference type="ChEBI" id="CHEBI:57792"/>
    </ligand>
</feature>
<feature type="binding site" evidence="1">
    <location>
        <position position="50"/>
    </location>
    <ligand>
        <name>1-deoxy-D-xylulose 5-phosphate</name>
        <dbReference type="ChEBI" id="CHEBI:57792"/>
    </ligand>
</feature>
<feature type="binding site" evidence="1">
    <location>
        <position position="100"/>
    </location>
    <ligand>
        <name>1-deoxy-D-xylulose 5-phosphate</name>
        <dbReference type="ChEBI" id="CHEBI:57792"/>
    </ligand>
</feature>
<feature type="binding site" evidence="1">
    <location>
        <position position="191"/>
    </location>
    <ligand>
        <name>3-amino-2-oxopropyl phosphate</name>
        <dbReference type="ChEBI" id="CHEBI:57279"/>
    </ligand>
</feature>
<feature type="binding site" evidence="1">
    <location>
        <begin position="212"/>
        <end position="213"/>
    </location>
    <ligand>
        <name>3-amino-2-oxopropyl phosphate</name>
        <dbReference type="ChEBI" id="CHEBI:57279"/>
    </ligand>
</feature>
<feature type="site" description="Transition state stabilizer" evidence="1">
    <location>
        <position position="151"/>
    </location>
</feature>
<keyword id="KW-0963">Cytoplasm</keyword>
<keyword id="KW-0664">Pyridoxine biosynthesis</keyword>
<keyword id="KW-0808">Transferase</keyword>
<accession>Q3AJ26</accession>
<name>PDXJ_SYNSC</name>
<comment type="function">
    <text evidence="1">Catalyzes the complicated ring closure reaction between the two acyclic compounds 1-deoxy-D-xylulose-5-phosphate (DXP) and 3-amino-2-oxopropyl phosphate (1-amino-acetone-3-phosphate or AAP) to form pyridoxine 5'-phosphate (PNP) and inorganic phosphate.</text>
</comment>
<comment type="catalytic activity">
    <reaction evidence="1">
        <text>3-amino-2-oxopropyl phosphate + 1-deoxy-D-xylulose 5-phosphate = pyridoxine 5'-phosphate + phosphate + 2 H2O + H(+)</text>
        <dbReference type="Rhea" id="RHEA:15265"/>
        <dbReference type="ChEBI" id="CHEBI:15377"/>
        <dbReference type="ChEBI" id="CHEBI:15378"/>
        <dbReference type="ChEBI" id="CHEBI:43474"/>
        <dbReference type="ChEBI" id="CHEBI:57279"/>
        <dbReference type="ChEBI" id="CHEBI:57792"/>
        <dbReference type="ChEBI" id="CHEBI:58589"/>
        <dbReference type="EC" id="2.6.99.2"/>
    </reaction>
</comment>
<comment type="pathway">
    <text evidence="1">Cofactor biosynthesis; pyridoxine 5'-phosphate biosynthesis; pyridoxine 5'-phosphate from D-erythrose 4-phosphate: step 5/5.</text>
</comment>
<comment type="subunit">
    <text evidence="1">Homooctamer; tetramer of dimers.</text>
</comment>
<comment type="subcellular location">
    <subcellularLocation>
        <location evidence="1">Cytoplasm</location>
    </subcellularLocation>
</comment>
<comment type="similarity">
    <text evidence="1">Belongs to the PNP synthase family.</text>
</comment>
<organism>
    <name type="scientific">Synechococcus sp. (strain CC9605)</name>
    <dbReference type="NCBI Taxonomy" id="110662"/>
    <lineage>
        <taxon>Bacteria</taxon>
        <taxon>Bacillati</taxon>
        <taxon>Cyanobacteriota</taxon>
        <taxon>Cyanophyceae</taxon>
        <taxon>Synechococcales</taxon>
        <taxon>Synechococcaceae</taxon>
        <taxon>Synechococcus</taxon>
    </lineage>
</organism>
<sequence length="249" mass="27002">MASLGVNIDHIANIREARRTVEPDPVSMALLAELGGADGITVHLREDRRHIQDRDVELLRQTVRSRLNLEMASTEEMVAIALRIKPDMVTLVPERREEVTTEGGLDVAGQKASLSAMVQTLQAAGIPVSLFVDPEATQLQACKNTGACWVELHTGRYADADWSTQPQELARLQEGTAIAQQLGLRVNAGHGLTYQNVEPIAAIAGMEELNIGHTIVARSVAVGLQQAVRDMKVLVQNPRLDPLFGQAPG</sequence>
<gene>
    <name evidence="1" type="primary">pdxJ</name>
    <name type="ordered locus">Syncc9605_1657</name>
</gene>
<dbReference type="EC" id="2.6.99.2" evidence="1"/>
<dbReference type="EMBL" id="CP000110">
    <property type="protein sequence ID" value="ABB35406.1"/>
    <property type="molecule type" value="Genomic_DNA"/>
</dbReference>
<dbReference type="RefSeq" id="WP_011364617.1">
    <property type="nucleotide sequence ID" value="NC_007516.1"/>
</dbReference>
<dbReference type="SMR" id="Q3AJ26"/>
<dbReference type="STRING" id="110662.Syncc9605_1657"/>
<dbReference type="KEGG" id="syd:Syncc9605_1657"/>
<dbReference type="eggNOG" id="COG0854">
    <property type="taxonomic scope" value="Bacteria"/>
</dbReference>
<dbReference type="HOGENOM" id="CLU_074563_0_0_3"/>
<dbReference type="OrthoDB" id="9806590at2"/>
<dbReference type="UniPathway" id="UPA00244">
    <property type="reaction ID" value="UER00313"/>
</dbReference>
<dbReference type="GO" id="GO:0005829">
    <property type="term" value="C:cytosol"/>
    <property type="evidence" value="ECO:0007669"/>
    <property type="project" value="TreeGrafter"/>
</dbReference>
<dbReference type="GO" id="GO:0033856">
    <property type="term" value="F:pyridoxine 5'-phosphate synthase activity"/>
    <property type="evidence" value="ECO:0007669"/>
    <property type="project" value="UniProtKB-EC"/>
</dbReference>
<dbReference type="GO" id="GO:0008615">
    <property type="term" value="P:pyridoxine biosynthetic process"/>
    <property type="evidence" value="ECO:0007669"/>
    <property type="project" value="UniProtKB-UniRule"/>
</dbReference>
<dbReference type="CDD" id="cd00003">
    <property type="entry name" value="PNPsynthase"/>
    <property type="match status" value="1"/>
</dbReference>
<dbReference type="Gene3D" id="3.20.20.70">
    <property type="entry name" value="Aldolase class I"/>
    <property type="match status" value="1"/>
</dbReference>
<dbReference type="HAMAP" id="MF_00279">
    <property type="entry name" value="PdxJ"/>
    <property type="match status" value="1"/>
</dbReference>
<dbReference type="InterPro" id="IPR013785">
    <property type="entry name" value="Aldolase_TIM"/>
</dbReference>
<dbReference type="InterPro" id="IPR004569">
    <property type="entry name" value="PyrdxlP_synth_PdxJ"/>
</dbReference>
<dbReference type="InterPro" id="IPR036130">
    <property type="entry name" value="Pyridoxine-5'_phos_synth"/>
</dbReference>
<dbReference type="NCBIfam" id="TIGR00559">
    <property type="entry name" value="pdxJ"/>
    <property type="match status" value="1"/>
</dbReference>
<dbReference type="NCBIfam" id="NF003623">
    <property type="entry name" value="PRK05265.1-1"/>
    <property type="match status" value="1"/>
</dbReference>
<dbReference type="NCBIfam" id="NF003625">
    <property type="entry name" value="PRK05265.1-3"/>
    <property type="match status" value="1"/>
</dbReference>
<dbReference type="NCBIfam" id="NF003627">
    <property type="entry name" value="PRK05265.1-5"/>
    <property type="match status" value="1"/>
</dbReference>
<dbReference type="PANTHER" id="PTHR30456">
    <property type="entry name" value="PYRIDOXINE 5'-PHOSPHATE SYNTHASE"/>
    <property type="match status" value="1"/>
</dbReference>
<dbReference type="PANTHER" id="PTHR30456:SF0">
    <property type="entry name" value="PYRIDOXINE 5'-PHOSPHATE SYNTHASE"/>
    <property type="match status" value="1"/>
</dbReference>
<dbReference type="Pfam" id="PF03740">
    <property type="entry name" value="PdxJ"/>
    <property type="match status" value="1"/>
</dbReference>
<dbReference type="SUPFAM" id="SSF63892">
    <property type="entry name" value="Pyridoxine 5'-phosphate synthase"/>
    <property type="match status" value="1"/>
</dbReference>
<proteinExistence type="inferred from homology"/>
<evidence type="ECO:0000255" key="1">
    <source>
        <dbReference type="HAMAP-Rule" id="MF_00279"/>
    </source>
</evidence>
<protein>
    <recommendedName>
        <fullName evidence="1">Pyridoxine 5'-phosphate synthase</fullName>
        <shortName evidence="1">PNP synthase</shortName>
        <ecNumber evidence="1">2.6.99.2</ecNumber>
    </recommendedName>
</protein>